<dbReference type="EMBL" id="AE015927">
    <property type="protein sequence ID" value="AAO37034.1"/>
    <property type="molecule type" value="Genomic_DNA"/>
</dbReference>
<dbReference type="RefSeq" id="WP_011100695.1">
    <property type="nucleotide sequence ID" value="NC_004557.1"/>
</dbReference>
<dbReference type="SMR" id="Q890R1"/>
<dbReference type="STRING" id="212717.CTC_02577"/>
<dbReference type="GeneID" id="24253216"/>
<dbReference type="KEGG" id="ctc:CTC_02577"/>
<dbReference type="HOGENOM" id="CLU_074407_2_2_9"/>
<dbReference type="OrthoDB" id="9809073at2"/>
<dbReference type="Proteomes" id="UP000001412">
    <property type="component" value="Chromosome"/>
</dbReference>
<dbReference type="GO" id="GO:0022625">
    <property type="term" value="C:cytosolic large ribosomal subunit"/>
    <property type="evidence" value="ECO:0007669"/>
    <property type="project" value="TreeGrafter"/>
</dbReference>
<dbReference type="GO" id="GO:0003735">
    <property type="term" value="F:structural constituent of ribosome"/>
    <property type="evidence" value="ECO:0007669"/>
    <property type="project" value="InterPro"/>
</dbReference>
<dbReference type="GO" id="GO:0006412">
    <property type="term" value="P:translation"/>
    <property type="evidence" value="ECO:0007669"/>
    <property type="project" value="UniProtKB-UniRule"/>
</dbReference>
<dbReference type="Gene3D" id="3.90.1030.10">
    <property type="entry name" value="Ribosomal protein L17"/>
    <property type="match status" value="1"/>
</dbReference>
<dbReference type="HAMAP" id="MF_01368">
    <property type="entry name" value="Ribosomal_bL17"/>
    <property type="match status" value="1"/>
</dbReference>
<dbReference type="InterPro" id="IPR000456">
    <property type="entry name" value="Ribosomal_bL17"/>
</dbReference>
<dbReference type="InterPro" id="IPR047859">
    <property type="entry name" value="Ribosomal_bL17_CS"/>
</dbReference>
<dbReference type="InterPro" id="IPR036373">
    <property type="entry name" value="Ribosomal_bL17_sf"/>
</dbReference>
<dbReference type="NCBIfam" id="TIGR00059">
    <property type="entry name" value="L17"/>
    <property type="match status" value="1"/>
</dbReference>
<dbReference type="PANTHER" id="PTHR14413:SF16">
    <property type="entry name" value="LARGE RIBOSOMAL SUBUNIT PROTEIN BL17M"/>
    <property type="match status" value="1"/>
</dbReference>
<dbReference type="PANTHER" id="PTHR14413">
    <property type="entry name" value="RIBOSOMAL PROTEIN L17"/>
    <property type="match status" value="1"/>
</dbReference>
<dbReference type="Pfam" id="PF01196">
    <property type="entry name" value="Ribosomal_L17"/>
    <property type="match status" value="1"/>
</dbReference>
<dbReference type="SUPFAM" id="SSF64263">
    <property type="entry name" value="Prokaryotic ribosomal protein L17"/>
    <property type="match status" value="1"/>
</dbReference>
<dbReference type="PROSITE" id="PS01167">
    <property type="entry name" value="RIBOSOMAL_L17"/>
    <property type="match status" value="1"/>
</dbReference>
<sequence>MAGHRKLGRPTDQRMAMLRNQVTSLLKSGKIETTVTRAKETRSLAEKMITLGKRGDLQARRQALSFVTEEEVVKRLFDDIAPKYAERNGGYTRMYKVGPRRGDGAEIVILELV</sequence>
<protein>
    <recommendedName>
        <fullName evidence="1">Large ribosomal subunit protein bL17</fullName>
    </recommendedName>
    <alternativeName>
        <fullName evidence="2">50S ribosomal protein L17</fullName>
    </alternativeName>
</protein>
<feature type="chain" id="PRO_0000267860" description="Large ribosomal subunit protein bL17">
    <location>
        <begin position="1"/>
        <end position="113"/>
    </location>
</feature>
<gene>
    <name evidence="1" type="primary">rplQ</name>
    <name type="ordered locus">CTC_02577</name>
</gene>
<organism>
    <name type="scientific">Clostridium tetani (strain Massachusetts / E88)</name>
    <dbReference type="NCBI Taxonomy" id="212717"/>
    <lineage>
        <taxon>Bacteria</taxon>
        <taxon>Bacillati</taxon>
        <taxon>Bacillota</taxon>
        <taxon>Clostridia</taxon>
        <taxon>Eubacteriales</taxon>
        <taxon>Clostridiaceae</taxon>
        <taxon>Clostridium</taxon>
    </lineage>
</organism>
<proteinExistence type="inferred from homology"/>
<accession>Q890R1</accession>
<reference key="1">
    <citation type="journal article" date="2003" name="Proc. Natl. Acad. Sci. U.S.A.">
        <title>The genome sequence of Clostridium tetani, the causative agent of tetanus disease.</title>
        <authorList>
            <person name="Brueggemann H."/>
            <person name="Baeumer S."/>
            <person name="Fricke W.F."/>
            <person name="Wiezer A."/>
            <person name="Liesegang H."/>
            <person name="Decker I."/>
            <person name="Herzberg C."/>
            <person name="Martinez-Arias R."/>
            <person name="Merkl R."/>
            <person name="Henne A."/>
            <person name="Gottschalk G."/>
        </authorList>
    </citation>
    <scope>NUCLEOTIDE SEQUENCE [LARGE SCALE GENOMIC DNA]</scope>
    <source>
        <strain>Massachusetts / E88</strain>
    </source>
</reference>
<keyword id="KW-1185">Reference proteome</keyword>
<keyword id="KW-0687">Ribonucleoprotein</keyword>
<keyword id="KW-0689">Ribosomal protein</keyword>
<evidence type="ECO:0000255" key="1">
    <source>
        <dbReference type="HAMAP-Rule" id="MF_01368"/>
    </source>
</evidence>
<evidence type="ECO:0000305" key="2"/>
<comment type="subunit">
    <text evidence="1">Part of the 50S ribosomal subunit. Contacts protein L32.</text>
</comment>
<comment type="similarity">
    <text evidence="1">Belongs to the bacterial ribosomal protein bL17 family.</text>
</comment>
<name>RL17_CLOTE</name>